<proteinExistence type="inferred from homology"/>
<reference key="1">
    <citation type="journal article" date="2008" name="J. Bacteriol.">
        <title>The pangenome structure of Escherichia coli: comparative genomic analysis of E. coli commensal and pathogenic isolates.</title>
        <authorList>
            <person name="Rasko D.A."/>
            <person name="Rosovitz M.J."/>
            <person name="Myers G.S.A."/>
            <person name="Mongodin E.F."/>
            <person name="Fricke W.F."/>
            <person name="Gajer P."/>
            <person name="Crabtree J."/>
            <person name="Sebaihia M."/>
            <person name="Thomson N.R."/>
            <person name="Chaudhuri R."/>
            <person name="Henderson I.R."/>
            <person name="Sperandio V."/>
            <person name="Ravel J."/>
        </authorList>
    </citation>
    <scope>NUCLEOTIDE SEQUENCE [LARGE SCALE GENOMIC DNA]</scope>
    <source>
        <strain>E24377A / ETEC</strain>
    </source>
</reference>
<feature type="chain" id="PRO_1000068526" description="Pyrimidine-specific ribonucleoside hydrolase RihA">
    <location>
        <begin position="1"/>
        <end position="311"/>
    </location>
</feature>
<feature type="active site" evidence="1">
    <location>
        <position position="240"/>
    </location>
</feature>
<organism>
    <name type="scientific">Escherichia coli O139:H28 (strain E24377A / ETEC)</name>
    <dbReference type="NCBI Taxonomy" id="331111"/>
    <lineage>
        <taxon>Bacteria</taxon>
        <taxon>Pseudomonadati</taxon>
        <taxon>Pseudomonadota</taxon>
        <taxon>Gammaproteobacteria</taxon>
        <taxon>Enterobacterales</taxon>
        <taxon>Enterobacteriaceae</taxon>
        <taxon>Escherichia</taxon>
    </lineage>
</organism>
<sequence>MALPILLDCDPGHDDAIAIVLALASPELDVKAITSSAGNQTPEKTLRNVLRMLTLLNRTDIPVAGGAVKPLMRELIIADNVHGESGLDGPALPEPAFAPQNCTAVELMAKTLRESAEPVTIVSTGPQTNVALLLNSHPELHSKIARIVIMGGAMGLGNWTPAAEFNIYVDPEAAEIVFQSGIPVVMAGLDVTHKAQIHVEDTERFRAIGNPVSTIVAELLDFFLEYHKDEKWGFVGAPLHDPCTIAWLLKPELFTTVERWVGVETQGKYTQGMTVVDYYYLTGNKPNATVMVDVDRQGFVDLLADRLKFYA</sequence>
<comment type="function">
    <text evidence="1">Hydrolyzes with equal efficiency cytidine or uridine to ribose and cytosine or uracil, respectively.</text>
</comment>
<comment type="similarity">
    <text evidence="1">Belongs to the IUNH family. RihA subfamily.</text>
</comment>
<dbReference type="EC" id="3.2.-.-" evidence="1"/>
<dbReference type="EMBL" id="CP000800">
    <property type="protein sequence ID" value="ABV17807.1"/>
    <property type="molecule type" value="Genomic_DNA"/>
</dbReference>
<dbReference type="RefSeq" id="WP_001207503.1">
    <property type="nucleotide sequence ID" value="NC_009801.1"/>
</dbReference>
<dbReference type="SMR" id="A7ZJ42"/>
<dbReference type="GeneID" id="75204988"/>
<dbReference type="KEGG" id="ecw:EcE24377A_0679"/>
<dbReference type="HOGENOM" id="CLU_036838_2_0_6"/>
<dbReference type="Proteomes" id="UP000001122">
    <property type="component" value="Chromosome"/>
</dbReference>
<dbReference type="GO" id="GO:0005829">
    <property type="term" value="C:cytosol"/>
    <property type="evidence" value="ECO:0007669"/>
    <property type="project" value="TreeGrafter"/>
</dbReference>
<dbReference type="GO" id="GO:0008477">
    <property type="term" value="F:purine nucleosidase activity"/>
    <property type="evidence" value="ECO:0007669"/>
    <property type="project" value="TreeGrafter"/>
</dbReference>
<dbReference type="GO" id="GO:0045437">
    <property type="term" value="F:uridine nucleosidase activity"/>
    <property type="evidence" value="ECO:0007669"/>
    <property type="project" value="InterPro"/>
</dbReference>
<dbReference type="GO" id="GO:0015949">
    <property type="term" value="P:nucleobase-containing small molecule interconversion"/>
    <property type="evidence" value="ECO:0007669"/>
    <property type="project" value="InterPro"/>
</dbReference>
<dbReference type="GO" id="GO:0006152">
    <property type="term" value="P:purine nucleoside catabolic process"/>
    <property type="evidence" value="ECO:0007669"/>
    <property type="project" value="TreeGrafter"/>
</dbReference>
<dbReference type="GO" id="GO:0006206">
    <property type="term" value="P:pyrimidine nucleobase metabolic process"/>
    <property type="evidence" value="ECO:0007669"/>
    <property type="project" value="UniProtKB-UniRule"/>
</dbReference>
<dbReference type="CDD" id="cd02651">
    <property type="entry name" value="nuc_hydro_IU_UC_XIUA"/>
    <property type="match status" value="1"/>
</dbReference>
<dbReference type="FunFam" id="3.90.245.10:FF:000001">
    <property type="entry name" value="Pyrimidine-specific ribonucleoside hydrolase RihA"/>
    <property type="match status" value="1"/>
</dbReference>
<dbReference type="Gene3D" id="3.90.245.10">
    <property type="entry name" value="Ribonucleoside hydrolase-like"/>
    <property type="match status" value="1"/>
</dbReference>
<dbReference type="HAMAP" id="MF_01431">
    <property type="entry name" value="Pyrim_hydro_RihA"/>
    <property type="match status" value="1"/>
</dbReference>
<dbReference type="InterPro" id="IPR015910">
    <property type="entry name" value="I/U_nuclsd_hydro_CS"/>
</dbReference>
<dbReference type="InterPro" id="IPR001910">
    <property type="entry name" value="Inosine/uridine_hydrolase_dom"/>
</dbReference>
<dbReference type="InterPro" id="IPR023186">
    <property type="entry name" value="IUNH"/>
</dbReference>
<dbReference type="InterPro" id="IPR022975">
    <property type="entry name" value="Pyrim_hydro_RihA"/>
</dbReference>
<dbReference type="InterPro" id="IPR036452">
    <property type="entry name" value="Ribo_hydro-like"/>
</dbReference>
<dbReference type="NCBIfam" id="NF007761">
    <property type="entry name" value="PRK10443.1"/>
    <property type="match status" value="1"/>
</dbReference>
<dbReference type="PANTHER" id="PTHR12304">
    <property type="entry name" value="INOSINE-URIDINE PREFERRING NUCLEOSIDE HYDROLASE"/>
    <property type="match status" value="1"/>
</dbReference>
<dbReference type="PANTHER" id="PTHR12304:SF4">
    <property type="entry name" value="URIDINE NUCLEOSIDASE"/>
    <property type="match status" value="1"/>
</dbReference>
<dbReference type="Pfam" id="PF01156">
    <property type="entry name" value="IU_nuc_hydro"/>
    <property type="match status" value="1"/>
</dbReference>
<dbReference type="SUPFAM" id="SSF53590">
    <property type="entry name" value="Nucleoside hydrolase"/>
    <property type="match status" value="1"/>
</dbReference>
<dbReference type="PROSITE" id="PS01247">
    <property type="entry name" value="IUNH"/>
    <property type="match status" value="1"/>
</dbReference>
<gene>
    <name evidence="1" type="primary">rihA</name>
    <name type="ordered locus">EcE24377A_0679</name>
</gene>
<protein>
    <recommendedName>
        <fullName evidence="1">Pyrimidine-specific ribonucleoside hydrolase RihA</fullName>
        <ecNumber evidence="1">3.2.-.-</ecNumber>
    </recommendedName>
    <alternativeName>
        <fullName evidence="1">Cytidine/uridine-specific hydrolase</fullName>
    </alternativeName>
</protein>
<accession>A7ZJ42</accession>
<name>RIHA_ECO24</name>
<evidence type="ECO:0000255" key="1">
    <source>
        <dbReference type="HAMAP-Rule" id="MF_01431"/>
    </source>
</evidence>
<keyword id="KW-0326">Glycosidase</keyword>
<keyword id="KW-0378">Hydrolase</keyword>
<keyword id="KW-1185">Reference proteome</keyword>